<feature type="chain" id="PRO_0000059226" description="Putative glycosyltransferase TagX">
    <location>
        <begin position="1"/>
        <end position="353"/>
    </location>
</feature>
<proteinExistence type="inferred from homology"/>
<comment type="similarity">
    <text evidence="1">Belongs to the glycosyltransferase 2 family.</text>
</comment>
<protein>
    <recommendedName>
        <fullName>Putative glycosyltransferase TagX</fullName>
        <ecNumber>2.4.-.-</ecNumber>
    </recommendedName>
    <alternativeName>
        <fullName>Teichoic acid biosynthesis protein X</fullName>
    </alternativeName>
</protein>
<reference key="1">
    <citation type="journal article" date="2004" name="Proc. Natl. Acad. Sci. U.S.A.">
        <title>Complete genomes of two clinical Staphylococcus aureus strains: evidence for the rapid evolution of virulence and drug resistance.</title>
        <authorList>
            <person name="Holden M.T.G."/>
            <person name="Feil E.J."/>
            <person name="Lindsay J.A."/>
            <person name="Peacock S.J."/>
            <person name="Day N.P.J."/>
            <person name="Enright M.C."/>
            <person name="Foster T.J."/>
            <person name="Moore C.E."/>
            <person name="Hurst L."/>
            <person name="Atkin R."/>
            <person name="Barron A."/>
            <person name="Bason N."/>
            <person name="Bentley S.D."/>
            <person name="Chillingworth C."/>
            <person name="Chillingworth T."/>
            <person name="Churcher C."/>
            <person name="Clark L."/>
            <person name="Corton C."/>
            <person name="Cronin A."/>
            <person name="Doggett J."/>
            <person name="Dowd L."/>
            <person name="Feltwell T."/>
            <person name="Hance Z."/>
            <person name="Harris B."/>
            <person name="Hauser H."/>
            <person name="Holroyd S."/>
            <person name="Jagels K."/>
            <person name="James K.D."/>
            <person name="Lennard N."/>
            <person name="Line A."/>
            <person name="Mayes R."/>
            <person name="Moule S."/>
            <person name="Mungall K."/>
            <person name="Ormond D."/>
            <person name="Quail M.A."/>
            <person name="Rabbinowitsch E."/>
            <person name="Rutherford K.M."/>
            <person name="Sanders M."/>
            <person name="Sharp S."/>
            <person name="Simmonds M."/>
            <person name="Stevens K."/>
            <person name="Whitehead S."/>
            <person name="Barrell B.G."/>
            <person name="Spratt B.G."/>
            <person name="Parkhill J."/>
        </authorList>
    </citation>
    <scope>NUCLEOTIDE SEQUENCE [LARGE SCALE GENOMIC DNA]</scope>
    <source>
        <strain>MRSA252</strain>
    </source>
</reference>
<sequence length="353" mass="41175">MRLTIIIPTCNNEATIRQLLISIESKEHYRILCIDGGSTDQTIPMIERLQRELKHISLIQLQNASIATCINKGLMEIKMTDPHDSDAFMVINPTSIVLPGKLDRLTAAFKNNDNIDMVIGQRAYNYHGEWKLKSADEFIKDNRIVTLTEQPDLLSMMSFDGKLFSAKFAELQCDVTLANTYNHEILVKAMQKATDIHLVSQMIVGDNDIDTHATSNNEDFKRYITEIMKIRQRVMEMLLLPEQRLLYSDMVDRILFNNSLKYYMNEHPAVTHTTIQLVKDYIMSMQHSDYVSQNMFDIINTVEFNGENWDREIYELWRQTLIQVGINRPTYKRFLIQLKGRKFAHRTKSMLKR</sequence>
<evidence type="ECO:0000305" key="1"/>
<organism>
    <name type="scientific">Staphylococcus aureus (strain MRSA252)</name>
    <dbReference type="NCBI Taxonomy" id="282458"/>
    <lineage>
        <taxon>Bacteria</taxon>
        <taxon>Bacillati</taxon>
        <taxon>Bacillota</taxon>
        <taxon>Bacilli</taxon>
        <taxon>Bacillales</taxon>
        <taxon>Staphylococcaceae</taxon>
        <taxon>Staphylococcus</taxon>
    </lineage>
</organism>
<name>TAGX_STAAR</name>
<dbReference type="EC" id="2.4.-.-"/>
<dbReference type="EMBL" id="BX571856">
    <property type="protein sequence ID" value="CAG39667.1"/>
    <property type="molecule type" value="Genomic_DNA"/>
</dbReference>
<dbReference type="RefSeq" id="WP_001241200.1">
    <property type="nucleotide sequence ID" value="NC_002952.2"/>
</dbReference>
<dbReference type="SMR" id="Q6GJ30"/>
<dbReference type="CAZy" id="GT2">
    <property type="family name" value="Glycosyltransferase Family 2"/>
</dbReference>
<dbReference type="KEGG" id="sar:SAR0650"/>
<dbReference type="HOGENOM" id="CLU_067098_0_0_9"/>
<dbReference type="Proteomes" id="UP000000596">
    <property type="component" value="Chromosome"/>
</dbReference>
<dbReference type="GO" id="GO:0016757">
    <property type="term" value="F:glycosyltransferase activity"/>
    <property type="evidence" value="ECO:0007669"/>
    <property type="project" value="UniProtKB-KW"/>
</dbReference>
<dbReference type="GO" id="GO:0071555">
    <property type="term" value="P:cell wall organization"/>
    <property type="evidence" value="ECO:0007669"/>
    <property type="project" value="UniProtKB-KW"/>
</dbReference>
<dbReference type="GO" id="GO:0008360">
    <property type="term" value="P:regulation of cell shape"/>
    <property type="evidence" value="ECO:0007669"/>
    <property type="project" value="UniProtKB-KW"/>
</dbReference>
<dbReference type="GO" id="GO:0019350">
    <property type="term" value="P:teichoic acid biosynthetic process"/>
    <property type="evidence" value="ECO:0007669"/>
    <property type="project" value="UniProtKB-KW"/>
</dbReference>
<dbReference type="CDD" id="cd00761">
    <property type="entry name" value="Glyco_tranf_GTA_type"/>
    <property type="match status" value="1"/>
</dbReference>
<dbReference type="Gene3D" id="3.90.550.10">
    <property type="entry name" value="Spore Coat Polysaccharide Biosynthesis Protein SpsA, Chain A"/>
    <property type="match status" value="1"/>
</dbReference>
<dbReference type="InterPro" id="IPR001173">
    <property type="entry name" value="Glyco_trans_2-like"/>
</dbReference>
<dbReference type="InterPro" id="IPR050834">
    <property type="entry name" value="Glycosyltransf_2"/>
</dbReference>
<dbReference type="InterPro" id="IPR029044">
    <property type="entry name" value="Nucleotide-diphossugar_trans"/>
</dbReference>
<dbReference type="PANTHER" id="PTHR43685">
    <property type="entry name" value="GLYCOSYLTRANSFERASE"/>
    <property type="match status" value="1"/>
</dbReference>
<dbReference type="PANTHER" id="PTHR43685:SF11">
    <property type="entry name" value="GLYCOSYLTRANSFERASE TAGX-RELATED"/>
    <property type="match status" value="1"/>
</dbReference>
<dbReference type="Pfam" id="PF00535">
    <property type="entry name" value="Glycos_transf_2"/>
    <property type="match status" value="1"/>
</dbReference>
<dbReference type="SUPFAM" id="SSF53448">
    <property type="entry name" value="Nucleotide-diphospho-sugar transferases"/>
    <property type="match status" value="1"/>
</dbReference>
<accession>Q6GJ30</accession>
<keyword id="KW-0133">Cell shape</keyword>
<keyword id="KW-0961">Cell wall biogenesis/degradation</keyword>
<keyword id="KW-0328">Glycosyltransferase</keyword>
<keyword id="KW-0777">Teichoic acid biosynthesis</keyword>
<keyword id="KW-0808">Transferase</keyword>
<gene>
    <name type="primary">tagX</name>
    <name type="ordered locus">SAR0650</name>
</gene>